<gene>
    <name evidence="1" type="primary">ves</name>
    <name type="ordered locus">EFER_1325</name>
</gene>
<evidence type="ECO:0000255" key="1">
    <source>
        <dbReference type="HAMAP-Rule" id="MF_01591"/>
    </source>
</evidence>
<evidence type="ECO:0000305" key="2"/>
<name>VES_ESCF3</name>
<proteinExistence type="inferred from homology"/>
<protein>
    <recommendedName>
        <fullName evidence="1">Protein Ves</fullName>
    </recommendedName>
</protein>
<sequence length="191" mass="21552">MEYFDIRKMPVNLWRNGAGETREICCFPPATRDFHWRASIASIATNGEFARFPGMERVVTLLEGGEIHLESTDSFSHTLKQLQPFAFSGEQIVKAQLNEGQMSMDFNIMTRCNSCKAKVRIADRTFTTFGSRGGVVFVISGIWQLGDKVLTTDQGACWYDGKHTLRLLQSTGKLLFSEINWLPGYSPDQVQ</sequence>
<feature type="chain" id="PRO_0000381771" description="Protein Ves">
    <location>
        <begin position="1"/>
        <end position="191"/>
    </location>
</feature>
<accession>B7LQ50</accession>
<reference key="1">
    <citation type="journal article" date="2009" name="PLoS Genet.">
        <title>Organised genome dynamics in the Escherichia coli species results in highly diverse adaptive paths.</title>
        <authorList>
            <person name="Touchon M."/>
            <person name="Hoede C."/>
            <person name="Tenaillon O."/>
            <person name="Barbe V."/>
            <person name="Baeriswyl S."/>
            <person name="Bidet P."/>
            <person name="Bingen E."/>
            <person name="Bonacorsi S."/>
            <person name="Bouchier C."/>
            <person name="Bouvet O."/>
            <person name="Calteau A."/>
            <person name="Chiapello H."/>
            <person name="Clermont O."/>
            <person name="Cruveiller S."/>
            <person name="Danchin A."/>
            <person name="Diard M."/>
            <person name="Dossat C."/>
            <person name="Karoui M.E."/>
            <person name="Frapy E."/>
            <person name="Garry L."/>
            <person name="Ghigo J.M."/>
            <person name="Gilles A.M."/>
            <person name="Johnson J."/>
            <person name="Le Bouguenec C."/>
            <person name="Lescat M."/>
            <person name="Mangenot S."/>
            <person name="Martinez-Jehanne V."/>
            <person name="Matic I."/>
            <person name="Nassif X."/>
            <person name="Oztas S."/>
            <person name="Petit M.A."/>
            <person name="Pichon C."/>
            <person name="Rouy Z."/>
            <person name="Ruf C.S."/>
            <person name="Schneider D."/>
            <person name="Tourret J."/>
            <person name="Vacherie B."/>
            <person name="Vallenet D."/>
            <person name="Medigue C."/>
            <person name="Rocha E.P.C."/>
            <person name="Denamur E."/>
        </authorList>
    </citation>
    <scope>NUCLEOTIDE SEQUENCE [LARGE SCALE GENOMIC DNA]</scope>
    <source>
        <strain>ATCC 35469 / DSM 13698 / BCRC 15582 / CCUG 18766 / IAM 14443 / JCM 21226 / LMG 7866 / NBRC 102419 / NCTC 12128 / CDC 0568-73</strain>
    </source>
</reference>
<dbReference type="EMBL" id="CU928158">
    <property type="protein sequence ID" value="CAQ88847.1"/>
    <property type="status" value="ALT_INIT"/>
    <property type="molecule type" value="Genomic_DNA"/>
</dbReference>
<dbReference type="RefSeq" id="WP_002431567.1">
    <property type="nucleotide sequence ID" value="NC_011740.1"/>
</dbReference>
<dbReference type="SMR" id="B7LQ50"/>
<dbReference type="GeneID" id="75057633"/>
<dbReference type="KEGG" id="efe:EFER_1325"/>
<dbReference type="HOGENOM" id="CLU_090931_5_0_6"/>
<dbReference type="OrthoDB" id="9800082at2"/>
<dbReference type="Proteomes" id="UP000000745">
    <property type="component" value="Chromosome"/>
</dbReference>
<dbReference type="CDD" id="cd20293">
    <property type="entry name" value="cupin_HutD_N"/>
    <property type="match status" value="1"/>
</dbReference>
<dbReference type="Gene3D" id="2.60.120.10">
    <property type="entry name" value="Jelly Rolls"/>
    <property type="match status" value="1"/>
</dbReference>
<dbReference type="HAMAP" id="MF_01591">
    <property type="entry name" value="Ves"/>
    <property type="match status" value="1"/>
</dbReference>
<dbReference type="InterPro" id="IPR014710">
    <property type="entry name" value="RmlC-like_jellyroll"/>
</dbReference>
<dbReference type="InterPro" id="IPR011051">
    <property type="entry name" value="RmlC_Cupin_sf"/>
</dbReference>
<dbReference type="InterPro" id="IPR010282">
    <property type="entry name" value="Uncharacterised_HutD/Ves"/>
</dbReference>
<dbReference type="InterPro" id="IPR023482">
    <property type="entry name" value="Uncharacterised_Ves"/>
</dbReference>
<dbReference type="NCBIfam" id="NF008488">
    <property type="entry name" value="PRK11396.1"/>
    <property type="match status" value="1"/>
</dbReference>
<dbReference type="PANTHER" id="PTHR37943">
    <property type="entry name" value="PROTEIN VES"/>
    <property type="match status" value="1"/>
</dbReference>
<dbReference type="PANTHER" id="PTHR37943:SF1">
    <property type="entry name" value="PROTEIN VES"/>
    <property type="match status" value="1"/>
</dbReference>
<dbReference type="Pfam" id="PF05962">
    <property type="entry name" value="HutD"/>
    <property type="match status" value="1"/>
</dbReference>
<dbReference type="SUPFAM" id="SSF51182">
    <property type="entry name" value="RmlC-like cupins"/>
    <property type="match status" value="1"/>
</dbReference>
<comment type="similarity">
    <text evidence="1">Belongs to the Ves family.</text>
</comment>
<comment type="sequence caution" evidence="2">
    <conflict type="erroneous initiation">
        <sequence resource="EMBL-CDS" id="CAQ88847"/>
    </conflict>
</comment>
<organism>
    <name type="scientific">Escherichia fergusonii (strain ATCC 35469 / DSM 13698 / CCUG 18766 / IAM 14443 / JCM 21226 / LMG 7866 / NBRC 102419 / NCTC 12128 / CDC 0568-73)</name>
    <dbReference type="NCBI Taxonomy" id="585054"/>
    <lineage>
        <taxon>Bacteria</taxon>
        <taxon>Pseudomonadati</taxon>
        <taxon>Pseudomonadota</taxon>
        <taxon>Gammaproteobacteria</taxon>
        <taxon>Enterobacterales</taxon>
        <taxon>Enterobacteriaceae</taxon>
        <taxon>Escherichia</taxon>
    </lineage>
</organism>